<sequence length="354" mass="38821">MSGNTIGKIFCVTTFGESHGEALGCIIDGTPPGLELSCKDLQYDLNRRRPGTSRYTTLRREPDEVNILSGIFNGVTTGTSIGLIIYNHDHRSQDYSDIKNLFRPGHADYTYEKKYGIRDYRGGGRSSARETAMRVAAGAIAKKYLNEKYGITIRAYLSAMGNIKCPFKSWQEVENNPFFCSDPEKILALENLIKYLKKIGDSIGAEITIIAENIPVGLGEPVFDRLDADLSHALMSINAAKGVEIGDGFSVINQRGSEHRDEITPQGFLTNHSGGILGGISNGREIVLKVAFKPTSSIRKAGNTINKNNEKVQIVTKGRHDPCVGLRAVPITEAMVAIVLMDHLLRFRAQCSGK</sequence>
<organism>
    <name type="scientific">Buchnera aphidicola subsp. Acyrthosiphon pisum (strain Tuc7)</name>
    <dbReference type="NCBI Taxonomy" id="561501"/>
    <lineage>
        <taxon>Bacteria</taxon>
        <taxon>Pseudomonadati</taxon>
        <taxon>Pseudomonadota</taxon>
        <taxon>Gammaproteobacteria</taxon>
        <taxon>Enterobacterales</taxon>
        <taxon>Erwiniaceae</taxon>
        <taxon>Buchnera</taxon>
    </lineage>
</organism>
<name>AROC_BUCAT</name>
<protein>
    <recommendedName>
        <fullName evidence="1">Chorismate synthase</fullName>
        <shortName evidence="1">CS</shortName>
        <ecNumber evidence="1">4.2.3.5</ecNumber>
    </recommendedName>
    <alternativeName>
        <fullName evidence="1">5-enolpyruvylshikimate-3-phosphate phospholyase</fullName>
    </alternativeName>
</protein>
<comment type="function">
    <text evidence="1">Catalyzes the anti-1,4-elimination of the C-3 phosphate and the C-6 proR hydrogen from 5-enolpyruvylshikimate-3-phosphate (EPSP) to yield chorismate, which is the branch point compound that serves as the starting substrate for the three terminal pathways of aromatic amino acid biosynthesis. This reaction introduces a second double bond into the aromatic ring system.</text>
</comment>
<comment type="catalytic activity">
    <reaction evidence="1">
        <text>5-O-(1-carboxyvinyl)-3-phosphoshikimate = chorismate + phosphate</text>
        <dbReference type="Rhea" id="RHEA:21020"/>
        <dbReference type="ChEBI" id="CHEBI:29748"/>
        <dbReference type="ChEBI" id="CHEBI:43474"/>
        <dbReference type="ChEBI" id="CHEBI:57701"/>
        <dbReference type="EC" id="4.2.3.5"/>
    </reaction>
</comment>
<comment type="cofactor">
    <cofactor evidence="1">
        <name>FMNH2</name>
        <dbReference type="ChEBI" id="CHEBI:57618"/>
    </cofactor>
    <text evidence="1">Reduced FMN (FMNH(2)).</text>
</comment>
<comment type="pathway">
    <text evidence="1">Metabolic intermediate biosynthesis; chorismate biosynthesis; chorismate from D-erythrose 4-phosphate and phosphoenolpyruvate: step 7/7.</text>
</comment>
<comment type="subunit">
    <text evidence="1">Homotetramer.</text>
</comment>
<comment type="similarity">
    <text evidence="1">Belongs to the chorismate synthase family.</text>
</comment>
<keyword id="KW-0028">Amino-acid biosynthesis</keyword>
<keyword id="KW-0057">Aromatic amino acid biosynthesis</keyword>
<keyword id="KW-0274">FAD</keyword>
<keyword id="KW-0285">Flavoprotein</keyword>
<keyword id="KW-0288">FMN</keyword>
<keyword id="KW-0456">Lyase</keyword>
<keyword id="KW-0521">NADP</keyword>
<accession>B8D703</accession>
<gene>
    <name evidence="1" type="primary">aroC</name>
    <name type="ordered locus">BUAPTUC7_096</name>
</gene>
<feature type="chain" id="PRO_1000132759" description="Chorismate synthase">
    <location>
        <begin position="1"/>
        <end position="354"/>
    </location>
</feature>
<feature type="binding site" evidence="1">
    <location>
        <position position="48"/>
    </location>
    <ligand>
        <name>NADP(+)</name>
        <dbReference type="ChEBI" id="CHEBI:58349"/>
    </ligand>
</feature>
<feature type="binding site" evidence="1">
    <location>
        <position position="54"/>
    </location>
    <ligand>
        <name>NADP(+)</name>
        <dbReference type="ChEBI" id="CHEBI:58349"/>
    </ligand>
</feature>
<feature type="binding site" evidence="1">
    <location>
        <begin position="125"/>
        <end position="127"/>
    </location>
    <ligand>
        <name>FMN</name>
        <dbReference type="ChEBI" id="CHEBI:58210"/>
    </ligand>
</feature>
<feature type="binding site" evidence="1">
    <location>
        <begin position="238"/>
        <end position="239"/>
    </location>
    <ligand>
        <name>FMN</name>
        <dbReference type="ChEBI" id="CHEBI:58210"/>
    </ligand>
</feature>
<feature type="binding site" evidence="1">
    <location>
        <position position="278"/>
    </location>
    <ligand>
        <name>FMN</name>
        <dbReference type="ChEBI" id="CHEBI:58210"/>
    </ligand>
</feature>
<feature type="binding site" evidence="1">
    <location>
        <begin position="293"/>
        <end position="297"/>
    </location>
    <ligand>
        <name>FMN</name>
        <dbReference type="ChEBI" id="CHEBI:58210"/>
    </ligand>
</feature>
<feature type="binding site" evidence="1">
    <location>
        <position position="319"/>
    </location>
    <ligand>
        <name>FMN</name>
        <dbReference type="ChEBI" id="CHEBI:58210"/>
    </ligand>
</feature>
<evidence type="ECO:0000255" key="1">
    <source>
        <dbReference type="HAMAP-Rule" id="MF_00300"/>
    </source>
</evidence>
<proteinExistence type="inferred from homology"/>
<reference key="1">
    <citation type="journal article" date="2009" name="Science">
        <title>The dynamics and time scale of ongoing genomic erosion in symbiotic bacteria.</title>
        <authorList>
            <person name="Moran N.A."/>
            <person name="McLaughlin H.J."/>
            <person name="Sorek R."/>
        </authorList>
    </citation>
    <scope>NUCLEOTIDE SEQUENCE [LARGE SCALE GENOMIC DNA]</scope>
    <source>
        <strain>Tuc7</strain>
    </source>
</reference>
<dbReference type="EC" id="4.2.3.5" evidence="1"/>
<dbReference type="EMBL" id="CP001158">
    <property type="protein sequence ID" value="ACL29918.1"/>
    <property type="molecule type" value="Genomic_DNA"/>
</dbReference>
<dbReference type="RefSeq" id="WP_009874051.1">
    <property type="nucleotide sequence ID" value="NC_011834.1"/>
</dbReference>
<dbReference type="SMR" id="B8D703"/>
<dbReference type="KEGG" id="bau:BUAPTUC7_096"/>
<dbReference type="HOGENOM" id="CLU_034547_0_2_6"/>
<dbReference type="UniPathway" id="UPA00053">
    <property type="reaction ID" value="UER00090"/>
</dbReference>
<dbReference type="GO" id="GO:0005829">
    <property type="term" value="C:cytosol"/>
    <property type="evidence" value="ECO:0007669"/>
    <property type="project" value="TreeGrafter"/>
</dbReference>
<dbReference type="GO" id="GO:0004107">
    <property type="term" value="F:chorismate synthase activity"/>
    <property type="evidence" value="ECO:0007669"/>
    <property type="project" value="UniProtKB-UniRule"/>
</dbReference>
<dbReference type="GO" id="GO:0010181">
    <property type="term" value="F:FMN binding"/>
    <property type="evidence" value="ECO:0007669"/>
    <property type="project" value="TreeGrafter"/>
</dbReference>
<dbReference type="GO" id="GO:0008652">
    <property type="term" value="P:amino acid biosynthetic process"/>
    <property type="evidence" value="ECO:0007669"/>
    <property type="project" value="UniProtKB-KW"/>
</dbReference>
<dbReference type="GO" id="GO:0009073">
    <property type="term" value="P:aromatic amino acid family biosynthetic process"/>
    <property type="evidence" value="ECO:0007669"/>
    <property type="project" value="UniProtKB-KW"/>
</dbReference>
<dbReference type="GO" id="GO:0009423">
    <property type="term" value="P:chorismate biosynthetic process"/>
    <property type="evidence" value="ECO:0007669"/>
    <property type="project" value="UniProtKB-UniRule"/>
</dbReference>
<dbReference type="CDD" id="cd07304">
    <property type="entry name" value="Chorismate_synthase"/>
    <property type="match status" value="1"/>
</dbReference>
<dbReference type="FunFam" id="3.60.150.10:FF:000001">
    <property type="entry name" value="Chorismate synthase"/>
    <property type="match status" value="1"/>
</dbReference>
<dbReference type="Gene3D" id="3.60.150.10">
    <property type="entry name" value="Chorismate synthase AroC"/>
    <property type="match status" value="1"/>
</dbReference>
<dbReference type="HAMAP" id="MF_00300">
    <property type="entry name" value="Chorismate_synth"/>
    <property type="match status" value="1"/>
</dbReference>
<dbReference type="InterPro" id="IPR000453">
    <property type="entry name" value="Chorismate_synth"/>
</dbReference>
<dbReference type="InterPro" id="IPR035904">
    <property type="entry name" value="Chorismate_synth_AroC_sf"/>
</dbReference>
<dbReference type="InterPro" id="IPR020541">
    <property type="entry name" value="Chorismate_synthase_CS"/>
</dbReference>
<dbReference type="NCBIfam" id="TIGR00033">
    <property type="entry name" value="aroC"/>
    <property type="match status" value="1"/>
</dbReference>
<dbReference type="NCBIfam" id="NF003793">
    <property type="entry name" value="PRK05382.1"/>
    <property type="match status" value="1"/>
</dbReference>
<dbReference type="PANTHER" id="PTHR21085">
    <property type="entry name" value="CHORISMATE SYNTHASE"/>
    <property type="match status" value="1"/>
</dbReference>
<dbReference type="PANTHER" id="PTHR21085:SF0">
    <property type="entry name" value="CHORISMATE SYNTHASE"/>
    <property type="match status" value="1"/>
</dbReference>
<dbReference type="Pfam" id="PF01264">
    <property type="entry name" value="Chorismate_synt"/>
    <property type="match status" value="1"/>
</dbReference>
<dbReference type="PIRSF" id="PIRSF001456">
    <property type="entry name" value="Chorismate_synth"/>
    <property type="match status" value="1"/>
</dbReference>
<dbReference type="SUPFAM" id="SSF103263">
    <property type="entry name" value="Chorismate synthase, AroC"/>
    <property type="match status" value="1"/>
</dbReference>
<dbReference type="PROSITE" id="PS00787">
    <property type="entry name" value="CHORISMATE_SYNTHASE_1"/>
    <property type="match status" value="1"/>
</dbReference>
<dbReference type="PROSITE" id="PS00788">
    <property type="entry name" value="CHORISMATE_SYNTHASE_2"/>
    <property type="match status" value="1"/>
</dbReference>
<dbReference type="PROSITE" id="PS00789">
    <property type="entry name" value="CHORISMATE_SYNTHASE_3"/>
    <property type="match status" value="1"/>
</dbReference>